<protein>
    <recommendedName>
        <fullName evidence="1">Ribosome-recycling factor</fullName>
        <shortName evidence="1">RRF</shortName>
    </recommendedName>
    <alternativeName>
        <fullName evidence="1">Ribosome-releasing factor</fullName>
    </alternativeName>
</protein>
<proteinExistence type="inferred from homology"/>
<sequence length="185" mass="20917">MLQAIYNETKDLMQKSIQALNRDFSTLRSAKVSVNILDHIKVDYYGTPTALNQVGSVMSLDATTLQISPWEKNLLKEIERSIQEANIGVNPNNDGETIKLFFPPMTTEQRKLIAKDAKAMGEKAKVAVRNTRQDANNKVKKLEKDKEISEDESKKAQEQIQKITDEAIKKIDESVKNKEDAILKV</sequence>
<name>RRF_HELPJ</name>
<comment type="function">
    <text evidence="1">Responsible for the release of ribosomes from messenger RNA at the termination of protein biosynthesis. May increase the efficiency of translation by recycling ribosomes from one round of translation to another.</text>
</comment>
<comment type="subcellular location">
    <subcellularLocation>
        <location evidence="1">Cytoplasm</location>
    </subcellularLocation>
</comment>
<comment type="similarity">
    <text evidence="1">Belongs to the RRF family.</text>
</comment>
<reference key="1">
    <citation type="journal article" date="1999" name="Nature">
        <title>Genomic sequence comparison of two unrelated isolates of the human gastric pathogen Helicobacter pylori.</title>
        <authorList>
            <person name="Alm R.A."/>
            <person name="Ling L.-S.L."/>
            <person name="Moir D.T."/>
            <person name="King B.L."/>
            <person name="Brown E.D."/>
            <person name="Doig P.C."/>
            <person name="Smith D.R."/>
            <person name="Noonan B."/>
            <person name="Guild B.C."/>
            <person name="deJonge B.L."/>
            <person name="Carmel G."/>
            <person name="Tummino P.J."/>
            <person name="Caruso A."/>
            <person name="Uria-Nickelsen M."/>
            <person name="Mills D.M."/>
            <person name="Ives C."/>
            <person name="Gibson R."/>
            <person name="Merberg D."/>
            <person name="Mills S.D."/>
            <person name="Jiang Q."/>
            <person name="Taylor D.E."/>
            <person name="Vovis G.F."/>
            <person name="Trust T.J."/>
        </authorList>
    </citation>
    <scope>NUCLEOTIDE SEQUENCE [LARGE SCALE GENOMIC DNA]</scope>
    <source>
        <strain>J99 / ATCC 700824</strain>
    </source>
</reference>
<gene>
    <name evidence="1" type="primary">frr</name>
    <name type="ordered locus">jhp_1177</name>
</gene>
<dbReference type="EMBL" id="AE001439">
    <property type="protein sequence ID" value="AAD06763.1"/>
    <property type="molecule type" value="Genomic_DNA"/>
</dbReference>
<dbReference type="PIR" id="F71837">
    <property type="entry name" value="F71837"/>
</dbReference>
<dbReference type="RefSeq" id="WP_000938354.1">
    <property type="nucleotide sequence ID" value="NZ_CP011330.1"/>
</dbReference>
<dbReference type="SMR" id="Q9ZJX1"/>
<dbReference type="KEGG" id="hpj:jhp_1177"/>
<dbReference type="PATRIC" id="fig|85963.30.peg.1395"/>
<dbReference type="eggNOG" id="COG0233">
    <property type="taxonomic scope" value="Bacteria"/>
</dbReference>
<dbReference type="Proteomes" id="UP000000804">
    <property type="component" value="Chromosome"/>
</dbReference>
<dbReference type="GO" id="GO:0005829">
    <property type="term" value="C:cytosol"/>
    <property type="evidence" value="ECO:0007669"/>
    <property type="project" value="GOC"/>
</dbReference>
<dbReference type="GO" id="GO:0043023">
    <property type="term" value="F:ribosomal large subunit binding"/>
    <property type="evidence" value="ECO:0007669"/>
    <property type="project" value="TreeGrafter"/>
</dbReference>
<dbReference type="GO" id="GO:0002184">
    <property type="term" value="P:cytoplasmic translational termination"/>
    <property type="evidence" value="ECO:0007669"/>
    <property type="project" value="TreeGrafter"/>
</dbReference>
<dbReference type="CDD" id="cd00520">
    <property type="entry name" value="RRF"/>
    <property type="match status" value="1"/>
</dbReference>
<dbReference type="FunFam" id="1.10.132.20:FF:000001">
    <property type="entry name" value="Ribosome-recycling factor"/>
    <property type="match status" value="1"/>
</dbReference>
<dbReference type="FunFam" id="3.30.1360.40:FF:000001">
    <property type="entry name" value="Ribosome-recycling factor"/>
    <property type="match status" value="1"/>
</dbReference>
<dbReference type="Gene3D" id="3.30.1360.40">
    <property type="match status" value="1"/>
</dbReference>
<dbReference type="Gene3D" id="1.10.132.20">
    <property type="entry name" value="Ribosome-recycling factor"/>
    <property type="match status" value="1"/>
</dbReference>
<dbReference type="HAMAP" id="MF_00040">
    <property type="entry name" value="RRF"/>
    <property type="match status" value="1"/>
</dbReference>
<dbReference type="InterPro" id="IPR002661">
    <property type="entry name" value="Ribosome_recyc_fac"/>
</dbReference>
<dbReference type="InterPro" id="IPR023584">
    <property type="entry name" value="Ribosome_recyc_fac_dom"/>
</dbReference>
<dbReference type="InterPro" id="IPR036191">
    <property type="entry name" value="RRF_sf"/>
</dbReference>
<dbReference type="NCBIfam" id="TIGR00496">
    <property type="entry name" value="frr"/>
    <property type="match status" value="1"/>
</dbReference>
<dbReference type="PANTHER" id="PTHR20982:SF3">
    <property type="entry name" value="MITOCHONDRIAL RIBOSOME RECYCLING FACTOR PSEUDO 1"/>
    <property type="match status" value="1"/>
</dbReference>
<dbReference type="PANTHER" id="PTHR20982">
    <property type="entry name" value="RIBOSOME RECYCLING FACTOR"/>
    <property type="match status" value="1"/>
</dbReference>
<dbReference type="Pfam" id="PF01765">
    <property type="entry name" value="RRF"/>
    <property type="match status" value="1"/>
</dbReference>
<dbReference type="SUPFAM" id="SSF55194">
    <property type="entry name" value="Ribosome recycling factor, RRF"/>
    <property type="match status" value="1"/>
</dbReference>
<evidence type="ECO:0000255" key="1">
    <source>
        <dbReference type="HAMAP-Rule" id="MF_00040"/>
    </source>
</evidence>
<evidence type="ECO:0000256" key="2">
    <source>
        <dbReference type="SAM" id="MobiDB-lite"/>
    </source>
</evidence>
<keyword id="KW-0963">Cytoplasm</keyword>
<keyword id="KW-0648">Protein biosynthesis</keyword>
<feature type="chain" id="PRO_0000167472" description="Ribosome-recycling factor">
    <location>
        <begin position="1"/>
        <end position="185"/>
    </location>
</feature>
<feature type="region of interest" description="Disordered" evidence="2">
    <location>
        <begin position="128"/>
        <end position="158"/>
    </location>
</feature>
<organism>
    <name type="scientific">Helicobacter pylori (strain J99 / ATCC 700824)</name>
    <name type="common">Campylobacter pylori J99</name>
    <dbReference type="NCBI Taxonomy" id="85963"/>
    <lineage>
        <taxon>Bacteria</taxon>
        <taxon>Pseudomonadati</taxon>
        <taxon>Campylobacterota</taxon>
        <taxon>Epsilonproteobacteria</taxon>
        <taxon>Campylobacterales</taxon>
        <taxon>Helicobacteraceae</taxon>
        <taxon>Helicobacter</taxon>
    </lineage>
</organism>
<accession>Q9ZJX1</accession>